<comment type="function">
    <text evidence="1">Has a dual specificity toward Ser/Thr and Tyr-containing proteins.</text>
</comment>
<comment type="catalytic activity">
    <reaction evidence="3">
        <text>O-phospho-L-tyrosyl-[protein] + H2O = L-tyrosyl-[protein] + phosphate</text>
        <dbReference type="Rhea" id="RHEA:10684"/>
        <dbReference type="Rhea" id="RHEA-COMP:10136"/>
        <dbReference type="Rhea" id="RHEA-COMP:20101"/>
        <dbReference type="ChEBI" id="CHEBI:15377"/>
        <dbReference type="ChEBI" id="CHEBI:43474"/>
        <dbReference type="ChEBI" id="CHEBI:46858"/>
        <dbReference type="ChEBI" id="CHEBI:61978"/>
        <dbReference type="EC" id="3.1.3.48"/>
    </reaction>
</comment>
<comment type="catalytic activity">
    <reaction>
        <text>O-phospho-L-seryl-[protein] + H2O = L-seryl-[protein] + phosphate</text>
        <dbReference type="Rhea" id="RHEA:20629"/>
        <dbReference type="Rhea" id="RHEA-COMP:9863"/>
        <dbReference type="Rhea" id="RHEA-COMP:11604"/>
        <dbReference type="ChEBI" id="CHEBI:15377"/>
        <dbReference type="ChEBI" id="CHEBI:29999"/>
        <dbReference type="ChEBI" id="CHEBI:43474"/>
        <dbReference type="ChEBI" id="CHEBI:83421"/>
        <dbReference type="EC" id="3.1.3.16"/>
    </reaction>
</comment>
<comment type="catalytic activity">
    <reaction evidence="1">
        <text>O-phospho-L-threonyl-[protein] + H2O = L-threonyl-[protein] + phosphate</text>
        <dbReference type="Rhea" id="RHEA:47004"/>
        <dbReference type="Rhea" id="RHEA-COMP:11060"/>
        <dbReference type="Rhea" id="RHEA-COMP:11605"/>
        <dbReference type="ChEBI" id="CHEBI:15377"/>
        <dbReference type="ChEBI" id="CHEBI:30013"/>
        <dbReference type="ChEBI" id="CHEBI:43474"/>
        <dbReference type="ChEBI" id="CHEBI:61977"/>
        <dbReference type="EC" id="3.1.3.16"/>
    </reaction>
</comment>
<comment type="similarity">
    <text evidence="4">Belongs to the protein-tyrosine phosphatase family. Non-receptor class dual specificity subfamily.</text>
</comment>
<name>DUSP2_DICDI</name>
<reference key="1">
    <citation type="journal article" date="2005" name="Nature">
        <title>The genome of the social amoeba Dictyostelium discoideum.</title>
        <authorList>
            <person name="Eichinger L."/>
            <person name="Pachebat J.A."/>
            <person name="Gloeckner G."/>
            <person name="Rajandream M.A."/>
            <person name="Sucgang R."/>
            <person name="Berriman M."/>
            <person name="Song J."/>
            <person name="Olsen R."/>
            <person name="Szafranski K."/>
            <person name="Xu Q."/>
            <person name="Tunggal B."/>
            <person name="Kummerfeld S."/>
            <person name="Madera M."/>
            <person name="Konfortov B.A."/>
            <person name="Rivero F."/>
            <person name="Bankier A.T."/>
            <person name="Lehmann R."/>
            <person name="Hamlin N."/>
            <person name="Davies R."/>
            <person name="Gaudet P."/>
            <person name="Fey P."/>
            <person name="Pilcher K."/>
            <person name="Chen G."/>
            <person name="Saunders D."/>
            <person name="Sodergren E.J."/>
            <person name="Davis P."/>
            <person name="Kerhornou A."/>
            <person name="Nie X."/>
            <person name="Hall N."/>
            <person name="Anjard C."/>
            <person name="Hemphill L."/>
            <person name="Bason N."/>
            <person name="Farbrother P."/>
            <person name="Desany B."/>
            <person name="Just E."/>
            <person name="Morio T."/>
            <person name="Rost R."/>
            <person name="Churcher C.M."/>
            <person name="Cooper J."/>
            <person name="Haydock S."/>
            <person name="van Driessche N."/>
            <person name="Cronin A."/>
            <person name="Goodhead I."/>
            <person name="Muzny D.M."/>
            <person name="Mourier T."/>
            <person name="Pain A."/>
            <person name="Lu M."/>
            <person name="Harper D."/>
            <person name="Lindsay R."/>
            <person name="Hauser H."/>
            <person name="James K.D."/>
            <person name="Quiles M."/>
            <person name="Madan Babu M."/>
            <person name="Saito T."/>
            <person name="Buchrieser C."/>
            <person name="Wardroper A."/>
            <person name="Felder M."/>
            <person name="Thangavelu M."/>
            <person name="Johnson D."/>
            <person name="Knights A."/>
            <person name="Loulseged H."/>
            <person name="Mungall K.L."/>
            <person name="Oliver K."/>
            <person name="Price C."/>
            <person name="Quail M.A."/>
            <person name="Urushihara H."/>
            <person name="Hernandez J."/>
            <person name="Rabbinowitsch E."/>
            <person name="Steffen D."/>
            <person name="Sanders M."/>
            <person name="Ma J."/>
            <person name="Kohara Y."/>
            <person name="Sharp S."/>
            <person name="Simmonds M.N."/>
            <person name="Spiegler S."/>
            <person name="Tivey A."/>
            <person name="Sugano S."/>
            <person name="White B."/>
            <person name="Walker D."/>
            <person name="Woodward J.R."/>
            <person name="Winckler T."/>
            <person name="Tanaka Y."/>
            <person name="Shaulsky G."/>
            <person name="Schleicher M."/>
            <person name="Weinstock G.M."/>
            <person name="Rosenthal A."/>
            <person name="Cox E.C."/>
            <person name="Chisholm R.L."/>
            <person name="Gibbs R.A."/>
            <person name="Loomis W.F."/>
            <person name="Platzer M."/>
            <person name="Kay R.R."/>
            <person name="Williams J.G."/>
            <person name="Dear P.H."/>
            <person name="Noegel A.A."/>
            <person name="Barrell B.G."/>
            <person name="Kuspa A."/>
        </authorList>
    </citation>
    <scope>NUCLEOTIDE SEQUENCE [LARGE SCALE GENOMIC DNA]</scope>
    <source>
        <strain>AX4</strain>
    </source>
</reference>
<accession>Q54R42</accession>
<gene>
    <name type="ORF">DDB_G0283417</name>
</gene>
<dbReference type="EC" id="3.1.3.16" evidence="1"/>
<dbReference type="EC" id="3.1.3.48" evidence="1"/>
<dbReference type="EMBL" id="AAFI02000055">
    <property type="protein sequence ID" value="EAL65693.1"/>
    <property type="molecule type" value="Genomic_DNA"/>
</dbReference>
<dbReference type="RefSeq" id="XP_639049.1">
    <property type="nucleotide sequence ID" value="XM_633957.1"/>
</dbReference>
<dbReference type="SMR" id="Q54R42"/>
<dbReference type="STRING" id="44689.Q54R42"/>
<dbReference type="PaxDb" id="44689-DDB0238562"/>
<dbReference type="EnsemblProtists" id="EAL65693">
    <property type="protein sequence ID" value="EAL65693"/>
    <property type="gene ID" value="DDB_G0283417"/>
</dbReference>
<dbReference type="GeneID" id="8624074"/>
<dbReference type="KEGG" id="ddi:DDB_G0283417"/>
<dbReference type="dictyBase" id="DDB_G0283417"/>
<dbReference type="VEuPathDB" id="AmoebaDB:DDB_G0283417"/>
<dbReference type="eggNOG" id="KOG1716">
    <property type="taxonomic scope" value="Eukaryota"/>
</dbReference>
<dbReference type="HOGENOM" id="CLU_027074_10_0_1"/>
<dbReference type="InParanoid" id="Q54R42"/>
<dbReference type="OMA" id="AHDLEIM"/>
<dbReference type="PhylomeDB" id="Q54R42"/>
<dbReference type="PRO" id="PR:Q54R42"/>
<dbReference type="Proteomes" id="UP000002195">
    <property type="component" value="Chromosome 4"/>
</dbReference>
<dbReference type="GO" id="GO:0005737">
    <property type="term" value="C:cytoplasm"/>
    <property type="evidence" value="ECO:0000318"/>
    <property type="project" value="GO_Central"/>
</dbReference>
<dbReference type="GO" id="GO:0008579">
    <property type="term" value="F:JUN kinase phosphatase activity"/>
    <property type="evidence" value="ECO:0000318"/>
    <property type="project" value="GO_Central"/>
</dbReference>
<dbReference type="GO" id="GO:0004722">
    <property type="term" value="F:protein serine/threonine phosphatase activity"/>
    <property type="evidence" value="ECO:0007669"/>
    <property type="project" value="UniProtKB-EC"/>
</dbReference>
<dbReference type="GO" id="GO:0004725">
    <property type="term" value="F:protein tyrosine phosphatase activity"/>
    <property type="evidence" value="ECO:0007669"/>
    <property type="project" value="UniProtKB-EC"/>
</dbReference>
<dbReference type="GO" id="GO:0046328">
    <property type="term" value="P:regulation of JNK cascade"/>
    <property type="evidence" value="ECO:0000318"/>
    <property type="project" value="GO_Central"/>
</dbReference>
<dbReference type="CDD" id="cd14498">
    <property type="entry name" value="DSP"/>
    <property type="match status" value="1"/>
</dbReference>
<dbReference type="Gene3D" id="3.90.190.10">
    <property type="entry name" value="Protein tyrosine phosphatase superfamily"/>
    <property type="match status" value="1"/>
</dbReference>
<dbReference type="InterPro" id="IPR000340">
    <property type="entry name" value="Dual-sp_phosphatase_cat-dom"/>
</dbReference>
<dbReference type="InterPro" id="IPR029021">
    <property type="entry name" value="Prot-tyrosine_phosphatase-like"/>
</dbReference>
<dbReference type="InterPro" id="IPR016130">
    <property type="entry name" value="Tyr_Pase_AS"/>
</dbReference>
<dbReference type="InterPro" id="IPR000387">
    <property type="entry name" value="Tyr_Pase_dom"/>
</dbReference>
<dbReference type="InterPro" id="IPR020422">
    <property type="entry name" value="TYR_PHOSPHATASE_DUAL_dom"/>
</dbReference>
<dbReference type="PANTHER" id="PTHR46377">
    <property type="entry name" value="DUAL SPECIFICITY PROTEIN PHOSPHATASE 19"/>
    <property type="match status" value="1"/>
</dbReference>
<dbReference type="PANTHER" id="PTHR46377:SF1">
    <property type="entry name" value="DUAL SPECIFICITY PROTEIN PHOSPHATASE 19"/>
    <property type="match status" value="1"/>
</dbReference>
<dbReference type="Pfam" id="PF00782">
    <property type="entry name" value="DSPc"/>
    <property type="match status" value="1"/>
</dbReference>
<dbReference type="SMART" id="SM00195">
    <property type="entry name" value="DSPc"/>
    <property type="match status" value="1"/>
</dbReference>
<dbReference type="SUPFAM" id="SSF52799">
    <property type="entry name" value="(Phosphotyrosine protein) phosphatases II"/>
    <property type="match status" value="1"/>
</dbReference>
<dbReference type="PROSITE" id="PS00383">
    <property type="entry name" value="TYR_PHOSPHATASE_1"/>
    <property type="match status" value="1"/>
</dbReference>
<dbReference type="PROSITE" id="PS50056">
    <property type="entry name" value="TYR_PHOSPHATASE_2"/>
    <property type="match status" value="1"/>
</dbReference>
<dbReference type="PROSITE" id="PS50054">
    <property type="entry name" value="TYR_PHOSPHATASE_DUAL"/>
    <property type="match status" value="1"/>
</dbReference>
<proteinExistence type="inferred from homology"/>
<feature type="chain" id="PRO_0000332951" description="Probable dual specificity protein phosphatase DDB_G0283417">
    <location>
        <begin position="1"/>
        <end position="230"/>
    </location>
</feature>
<feature type="domain" description="Tyrosine-protein phosphatase" evidence="2">
    <location>
        <begin position="78"/>
        <end position="230"/>
    </location>
</feature>
<feature type="active site" description="Phosphocysteine intermediate" evidence="2">
    <location>
        <position position="174"/>
    </location>
</feature>
<evidence type="ECO:0000250" key="1">
    <source>
        <dbReference type="UniProtKB" id="Q05923"/>
    </source>
</evidence>
<evidence type="ECO:0000255" key="2">
    <source>
        <dbReference type="PROSITE-ProRule" id="PRU00160"/>
    </source>
</evidence>
<evidence type="ECO:0000255" key="3">
    <source>
        <dbReference type="PROSITE-ProRule" id="PRU10044"/>
    </source>
</evidence>
<evidence type="ECO:0000305" key="4"/>
<keyword id="KW-0378">Hydrolase</keyword>
<keyword id="KW-0904">Protein phosphatase</keyword>
<keyword id="KW-1185">Reference proteome</keyword>
<organism>
    <name type="scientific">Dictyostelium discoideum</name>
    <name type="common">Social amoeba</name>
    <dbReference type="NCBI Taxonomy" id="44689"/>
    <lineage>
        <taxon>Eukaryota</taxon>
        <taxon>Amoebozoa</taxon>
        <taxon>Evosea</taxon>
        <taxon>Eumycetozoa</taxon>
        <taxon>Dictyostelia</taxon>
        <taxon>Dictyosteliales</taxon>
        <taxon>Dictyosteliaceae</taxon>
        <taxon>Dictyostelium</taxon>
    </lineage>
</organism>
<sequence length="230" mass="26189">MVNLEELSLKRNNMKRTETTFTDISGKRYQVANINEENSESNRIELNRTSGFVIDTKPDDLSHKIEIIIPQSILNNNNNNYESINLYIGSQDAAFNKLDLQLKNIKSILNVGIGINNLFTKENSDINDGFIINYCNVEIFDDVNFNIIEKFDKCFEFIDSNIGGVENNGILVHCNAGVSRSATILISYLMKKLKIPLSLSLEILKSSRPQCKPNQGFLKQLEIFEKELLF</sequence>
<protein>
    <recommendedName>
        <fullName>Probable dual specificity protein phosphatase DDB_G0283417</fullName>
        <ecNumber evidence="1">3.1.3.16</ecNumber>
        <ecNumber evidence="1">3.1.3.48</ecNumber>
    </recommendedName>
</protein>